<reference key="1">
    <citation type="submission" date="2007-03" db="EMBL/GenBank/DDBJ databases">
        <title>Sequencing analysis of Lobularia maritima chloroplast DNA.</title>
        <authorList>
            <person name="Hosouchi T."/>
            <person name="Tsuruoka H."/>
            <person name="Kotani H."/>
        </authorList>
    </citation>
    <scope>NUCLEOTIDE SEQUENCE [LARGE SCALE GENOMIC DNA]</scope>
</reference>
<gene>
    <name evidence="1" type="primary">rpoB</name>
</gene>
<comment type="function">
    <text evidence="1">DNA-dependent RNA polymerase catalyzes the transcription of DNA into RNA using the four ribonucleoside triphosphates as substrates.</text>
</comment>
<comment type="catalytic activity">
    <reaction evidence="1">
        <text>RNA(n) + a ribonucleoside 5'-triphosphate = RNA(n+1) + diphosphate</text>
        <dbReference type="Rhea" id="RHEA:21248"/>
        <dbReference type="Rhea" id="RHEA-COMP:14527"/>
        <dbReference type="Rhea" id="RHEA-COMP:17342"/>
        <dbReference type="ChEBI" id="CHEBI:33019"/>
        <dbReference type="ChEBI" id="CHEBI:61557"/>
        <dbReference type="ChEBI" id="CHEBI:140395"/>
        <dbReference type="EC" id="2.7.7.6"/>
    </reaction>
</comment>
<comment type="subunit">
    <text evidence="1">In plastids the minimal PEP RNA polymerase catalytic core is composed of four subunits: alpha, beta, beta', and beta''. When a (nuclear-encoded) sigma factor is associated with the core the holoenzyme is formed, which can initiate transcription.</text>
</comment>
<comment type="subcellular location">
    <subcellularLocation>
        <location>Plastid</location>
        <location>Chloroplast</location>
    </subcellularLocation>
</comment>
<comment type="similarity">
    <text evidence="1">Belongs to the RNA polymerase beta chain family.</text>
</comment>
<proteinExistence type="inferred from homology"/>
<feature type="chain" id="PRO_0000300447" description="DNA-directed RNA polymerase subunit beta">
    <location>
        <begin position="1"/>
        <end position="1072"/>
    </location>
</feature>
<dbReference type="EC" id="2.7.7.6" evidence="1"/>
<dbReference type="EMBL" id="AP009375">
    <property type="protein sequence ID" value="BAF50541.1"/>
    <property type="molecule type" value="Genomic_DNA"/>
</dbReference>
<dbReference type="RefSeq" id="YP_001123717.1">
    <property type="nucleotide sequence ID" value="NC_009274.1"/>
</dbReference>
<dbReference type="SMR" id="A4QLI6"/>
<dbReference type="GeneID" id="4964888"/>
<dbReference type="GO" id="GO:0009507">
    <property type="term" value="C:chloroplast"/>
    <property type="evidence" value="ECO:0007669"/>
    <property type="project" value="UniProtKB-SubCell"/>
</dbReference>
<dbReference type="GO" id="GO:0000428">
    <property type="term" value="C:DNA-directed RNA polymerase complex"/>
    <property type="evidence" value="ECO:0007669"/>
    <property type="project" value="UniProtKB-KW"/>
</dbReference>
<dbReference type="GO" id="GO:0005739">
    <property type="term" value="C:mitochondrion"/>
    <property type="evidence" value="ECO:0007669"/>
    <property type="project" value="GOC"/>
</dbReference>
<dbReference type="GO" id="GO:0003677">
    <property type="term" value="F:DNA binding"/>
    <property type="evidence" value="ECO:0007669"/>
    <property type="project" value="UniProtKB-UniRule"/>
</dbReference>
<dbReference type="GO" id="GO:0003899">
    <property type="term" value="F:DNA-directed RNA polymerase activity"/>
    <property type="evidence" value="ECO:0007669"/>
    <property type="project" value="UniProtKB-UniRule"/>
</dbReference>
<dbReference type="GO" id="GO:0032549">
    <property type="term" value="F:ribonucleoside binding"/>
    <property type="evidence" value="ECO:0007669"/>
    <property type="project" value="InterPro"/>
</dbReference>
<dbReference type="GO" id="GO:0006351">
    <property type="term" value="P:DNA-templated transcription"/>
    <property type="evidence" value="ECO:0007669"/>
    <property type="project" value="UniProtKB-UniRule"/>
</dbReference>
<dbReference type="CDD" id="cd00653">
    <property type="entry name" value="RNA_pol_B_RPB2"/>
    <property type="match status" value="1"/>
</dbReference>
<dbReference type="FunFam" id="2.40.50.150:FF:000006">
    <property type="entry name" value="DNA-directed RNA polymerase subunit beta"/>
    <property type="match status" value="1"/>
</dbReference>
<dbReference type="FunFam" id="3.90.1110.10:FF:000009">
    <property type="entry name" value="DNA-directed RNA polymerase subunit beta"/>
    <property type="match status" value="1"/>
</dbReference>
<dbReference type="Gene3D" id="2.40.50.100">
    <property type="match status" value="1"/>
</dbReference>
<dbReference type="Gene3D" id="2.40.50.150">
    <property type="match status" value="1"/>
</dbReference>
<dbReference type="Gene3D" id="3.90.1100.10">
    <property type="match status" value="1"/>
</dbReference>
<dbReference type="Gene3D" id="2.30.150.10">
    <property type="entry name" value="DNA-directed RNA polymerase, beta subunit, external 1 domain"/>
    <property type="match status" value="1"/>
</dbReference>
<dbReference type="Gene3D" id="2.40.270.10">
    <property type="entry name" value="DNA-directed RNA polymerase, subunit 2, domain 6"/>
    <property type="match status" value="2"/>
</dbReference>
<dbReference type="Gene3D" id="3.90.1800.10">
    <property type="entry name" value="RNA polymerase alpha subunit dimerisation domain"/>
    <property type="match status" value="1"/>
</dbReference>
<dbReference type="Gene3D" id="3.90.1110.10">
    <property type="entry name" value="RNA polymerase Rpb2, domain 2"/>
    <property type="match status" value="1"/>
</dbReference>
<dbReference type="HAMAP" id="MF_01321">
    <property type="entry name" value="RNApol_bact_RpoB"/>
    <property type="match status" value="1"/>
</dbReference>
<dbReference type="InterPro" id="IPR042107">
    <property type="entry name" value="DNA-dir_RNA_pol_bsu_ext_1_sf"/>
</dbReference>
<dbReference type="InterPro" id="IPR015712">
    <property type="entry name" value="DNA-dir_RNA_pol_su2"/>
</dbReference>
<dbReference type="InterPro" id="IPR007120">
    <property type="entry name" value="DNA-dir_RNAP_su2_dom"/>
</dbReference>
<dbReference type="InterPro" id="IPR037033">
    <property type="entry name" value="DNA-dir_RNAP_su2_hyb_sf"/>
</dbReference>
<dbReference type="InterPro" id="IPR010243">
    <property type="entry name" value="RNA_pol_bsu_bac"/>
</dbReference>
<dbReference type="InterPro" id="IPR007121">
    <property type="entry name" value="RNA_pol_bsu_CS"/>
</dbReference>
<dbReference type="InterPro" id="IPR007642">
    <property type="entry name" value="RNA_pol_Rpb2_2"/>
</dbReference>
<dbReference type="InterPro" id="IPR037034">
    <property type="entry name" value="RNA_pol_Rpb2_2_sf"/>
</dbReference>
<dbReference type="InterPro" id="IPR007645">
    <property type="entry name" value="RNA_pol_Rpb2_3"/>
</dbReference>
<dbReference type="InterPro" id="IPR007641">
    <property type="entry name" value="RNA_pol_Rpb2_7"/>
</dbReference>
<dbReference type="InterPro" id="IPR014724">
    <property type="entry name" value="RNA_pol_RPB2_OB-fold"/>
</dbReference>
<dbReference type="NCBIfam" id="NF001616">
    <property type="entry name" value="PRK00405.1"/>
    <property type="match status" value="1"/>
</dbReference>
<dbReference type="PANTHER" id="PTHR20856">
    <property type="entry name" value="DNA-DIRECTED RNA POLYMERASE I SUBUNIT 2"/>
    <property type="match status" value="1"/>
</dbReference>
<dbReference type="Pfam" id="PF04561">
    <property type="entry name" value="RNA_pol_Rpb2_2"/>
    <property type="match status" value="1"/>
</dbReference>
<dbReference type="Pfam" id="PF04565">
    <property type="entry name" value="RNA_pol_Rpb2_3"/>
    <property type="match status" value="1"/>
</dbReference>
<dbReference type="Pfam" id="PF00562">
    <property type="entry name" value="RNA_pol_Rpb2_6"/>
    <property type="match status" value="1"/>
</dbReference>
<dbReference type="Pfam" id="PF04560">
    <property type="entry name" value="RNA_pol_Rpb2_7"/>
    <property type="match status" value="1"/>
</dbReference>
<dbReference type="SUPFAM" id="SSF64484">
    <property type="entry name" value="beta and beta-prime subunits of DNA dependent RNA-polymerase"/>
    <property type="match status" value="1"/>
</dbReference>
<dbReference type="PROSITE" id="PS01166">
    <property type="entry name" value="RNA_POL_BETA"/>
    <property type="match status" value="1"/>
</dbReference>
<name>RPOB_LOBMA</name>
<sequence length="1072" mass="121059">MLGDGKEGTSTIPGFNQIQFEGFYRFIDQGLIEELSKFPKIEDIDHEIEFQLFVETYQLVEPLIKERDAVYESLTYSSELYVSAGLIWKTSRNMQEQRIFIGNIPLMNSLGTSIVNGIYRIVINQILQSPGIYYQSELDHNGISVYTGTIISDWGGRLELEIDKKARIWARVSRKQKISILVLSSAMGSNLREILENVCYPEIFLSFLTDKEKKKIGSKENAILEFYKQFSCVGGDPIFSESLCKELQKKFFHQRCELGRIGRRNINWRLNLNIPQNNIFLLPRDILAAADHLIGMKFGMGTLDDMNHLKNKRIRSVADLLQDQLGLALARLENVVKGTIGGAIRHKLIPTPQNLVTSTPLTTTYESFFGLHPLSQVLDRTNPLTQIVHGRKLSYLGPGGLTGRTANFRIRDIHPSHYGRICPIDTSEGINVGLIGSLSIHARIGDWGSLESPFYELFEKSKKARIRMLFLSPSQDEYYMIAAGNSLALNRGIQEEQAVPARYRQEFLTIAWEEVHLRSILPFQYFSIGASLIPFIEHNDANRALMSSNMQRQAVPLSRSEKCIVGTGLERQVALDSGVPAIAEHEGKILYTDTEKIILSGNGDTFSIPLIMYQRSNKNTCMHQKPQVRRGKYIKKGQILADGAATVGGELSLGKNILVAYMPWEGYNFEDAVLISESLVYDDIYTSFHIRKYEIQTHVTTQGPERITKEIPHLEGRLLRNLDKNGIVMLGSWVETGDILVGKLTPQVAKESSYAPEDRLLRAILGIQVSTSKETCLKLPIGGRGRVIDVRWVQKKGGSSYNPEKIRVYISQKREIKVGDKVAGRHGNKGIISKILPRQDMPYLQDGRPVDMVFNPLGVPSRMNVGQIFECSLGLAGSLLDRHYRIAPFDERYEQEASRKLVFSELYQASKQTANPWVFEPEYPGKSRIFDGRTGDPFEQPVIIGKPYILKLIHQVDDKIHGRSSGHYALVTQQPLRGRSKQGGQRVGEMEVWALEGFGVAHILQEMLTYKSDHIRARQEVLATTIIGGTIPKPEDAPESFRLLVRELRSLALELNHFLVSEKNFQINRKAV</sequence>
<evidence type="ECO:0000255" key="1">
    <source>
        <dbReference type="HAMAP-Rule" id="MF_01321"/>
    </source>
</evidence>
<organism>
    <name type="scientific">Lobularia maritima</name>
    <name type="common">Sweet alyssum</name>
    <name type="synonym">Alyssum maritimum</name>
    <dbReference type="NCBI Taxonomy" id="226051"/>
    <lineage>
        <taxon>Eukaryota</taxon>
        <taxon>Viridiplantae</taxon>
        <taxon>Streptophyta</taxon>
        <taxon>Embryophyta</taxon>
        <taxon>Tracheophyta</taxon>
        <taxon>Spermatophyta</taxon>
        <taxon>Magnoliopsida</taxon>
        <taxon>eudicotyledons</taxon>
        <taxon>Gunneridae</taxon>
        <taxon>Pentapetalae</taxon>
        <taxon>rosids</taxon>
        <taxon>malvids</taxon>
        <taxon>Brassicales</taxon>
        <taxon>Brassicaceae</taxon>
        <taxon>Anastaticeae</taxon>
        <taxon>Lobularia</taxon>
    </lineage>
</organism>
<accession>A4QLI6</accession>
<protein>
    <recommendedName>
        <fullName evidence="1">DNA-directed RNA polymerase subunit beta</fullName>
        <ecNumber evidence="1">2.7.7.6</ecNumber>
    </recommendedName>
    <alternativeName>
        <fullName evidence="1">PEP</fullName>
    </alternativeName>
    <alternativeName>
        <fullName evidence="1">Plastid-encoded RNA polymerase subunit beta</fullName>
        <shortName evidence="1">RNA polymerase subunit beta</shortName>
    </alternativeName>
</protein>
<keyword id="KW-0150">Chloroplast</keyword>
<keyword id="KW-0240">DNA-directed RNA polymerase</keyword>
<keyword id="KW-0548">Nucleotidyltransferase</keyword>
<keyword id="KW-0934">Plastid</keyword>
<keyword id="KW-0804">Transcription</keyword>
<keyword id="KW-0808">Transferase</keyword>
<geneLocation type="chloroplast"/>